<reference key="1">
    <citation type="submission" date="2008-01" db="EMBL/GenBank/DDBJ databases">
        <title>Complete sequence of Thermoanaerobacter sp. X514.</title>
        <authorList>
            <consortium name="US DOE Joint Genome Institute"/>
            <person name="Copeland A."/>
            <person name="Lucas S."/>
            <person name="Lapidus A."/>
            <person name="Barry K."/>
            <person name="Glavina del Rio T."/>
            <person name="Dalin E."/>
            <person name="Tice H."/>
            <person name="Pitluck S."/>
            <person name="Bruce D."/>
            <person name="Goodwin L."/>
            <person name="Saunders E."/>
            <person name="Brettin T."/>
            <person name="Detter J.C."/>
            <person name="Han C."/>
            <person name="Schmutz J."/>
            <person name="Larimer F."/>
            <person name="Land M."/>
            <person name="Hauser L."/>
            <person name="Kyrpides N."/>
            <person name="Kim E."/>
            <person name="Hemme C."/>
            <person name="Fields M.W."/>
            <person name="He Z."/>
            <person name="Zhou J."/>
            <person name="Richardson P."/>
        </authorList>
    </citation>
    <scope>NUCLEOTIDE SEQUENCE [LARGE SCALE GENOMIC DNA]</scope>
    <source>
        <strain>X514</strain>
    </source>
</reference>
<keyword id="KW-1003">Cell membrane</keyword>
<keyword id="KW-0255">Endonuclease</keyword>
<keyword id="KW-0378">Hydrolase</keyword>
<keyword id="KW-0472">Membrane</keyword>
<keyword id="KW-0540">Nuclease</keyword>
<keyword id="KW-0694">RNA-binding</keyword>
<keyword id="KW-0812">Transmembrane</keyword>
<keyword id="KW-1133">Transmembrane helix</keyword>
<gene>
    <name evidence="1" type="primary">rny</name>
    <name type="ordered locus">Teth514_1625</name>
</gene>
<protein>
    <recommendedName>
        <fullName evidence="1">Ribonuclease Y</fullName>
        <shortName evidence="1">RNase Y</shortName>
        <ecNumber evidence="1">3.1.-.-</ecNumber>
    </recommendedName>
</protein>
<proteinExistence type="inferred from homology"/>
<dbReference type="EC" id="3.1.-.-" evidence="1"/>
<dbReference type="EMBL" id="CP000923">
    <property type="protein sequence ID" value="ABY92911.1"/>
    <property type="molecule type" value="Genomic_DNA"/>
</dbReference>
<dbReference type="RefSeq" id="WP_009052383.1">
    <property type="nucleotide sequence ID" value="NC_010320.1"/>
</dbReference>
<dbReference type="SMR" id="B0K1B6"/>
<dbReference type="KEGG" id="tex:Teth514_1625"/>
<dbReference type="HOGENOM" id="CLU_028328_1_0_9"/>
<dbReference type="Proteomes" id="UP000002155">
    <property type="component" value="Chromosome"/>
</dbReference>
<dbReference type="GO" id="GO:0005886">
    <property type="term" value="C:plasma membrane"/>
    <property type="evidence" value="ECO:0007669"/>
    <property type="project" value="UniProtKB-SubCell"/>
</dbReference>
<dbReference type="GO" id="GO:0003723">
    <property type="term" value="F:RNA binding"/>
    <property type="evidence" value="ECO:0007669"/>
    <property type="project" value="UniProtKB-UniRule"/>
</dbReference>
<dbReference type="GO" id="GO:0004521">
    <property type="term" value="F:RNA endonuclease activity"/>
    <property type="evidence" value="ECO:0007669"/>
    <property type="project" value="UniProtKB-UniRule"/>
</dbReference>
<dbReference type="GO" id="GO:0006402">
    <property type="term" value="P:mRNA catabolic process"/>
    <property type="evidence" value="ECO:0007669"/>
    <property type="project" value="UniProtKB-UniRule"/>
</dbReference>
<dbReference type="CDD" id="cd00077">
    <property type="entry name" value="HDc"/>
    <property type="match status" value="1"/>
</dbReference>
<dbReference type="CDD" id="cd22431">
    <property type="entry name" value="KH-I_RNaseY"/>
    <property type="match status" value="1"/>
</dbReference>
<dbReference type="FunFam" id="1.10.3210.10:FF:000022">
    <property type="entry name" value="Ribonuclease Y"/>
    <property type="match status" value="1"/>
</dbReference>
<dbReference type="FunFam" id="3.30.1370.10:FF:000006">
    <property type="entry name" value="Ribonuclease Y"/>
    <property type="match status" value="1"/>
</dbReference>
<dbReference type="Gene3D" id="1.10.3210.10">
    <property type="entry name" value="Hypothetical protein af1432"/>
    <property type="match status" value="1"/>
</dbReference>
<dbReference type="Gene3D" id="3.30.1370.10">
    <property type="entry name" value="K Homology domain, type 1"/>
    <property type="match status" value="1"/>
</dbReference>
<dbReference type="HAMAP" id="MF_00335">
    <property type="entry name" value="RNase_Y"/>
    <property type="match status" value="1"/>
</dbReference>
<dbReference type="InterPro" id="IPR003607">
    <property type="entry name" value="HD/PDEase_dom"/>
</dbReference>
<dbReference type="InterPro" id="IPR006674">
    <property type="entry name" value="HD_domain"/>
</dbReference>
<dbReference type="InterPro" id="IPR006675">
    <property type="entry name" value="HDIG_dom"/>
</dbReference>
<dbReference type="InterPro" id="IPR004087">
    <property type="entry name" value="KH_dom"/>
</dbReference>
<dbReference type="InterPro" id="IPR004088">
    <property type="entry name" value="KH_dom_type_1"/>
</dbReference>
<dbReference type="InterPro" id="IPR036612">
    <property type="entry name" value="KH_dom_type_1_sf"/>
</dbReference>
<dbReference type="InterPro" id="IPR017705">
    <property type="entry name" value="Ribonuclease_Y"/>
</dbReference>
<dbReference type="InterPro" id="IPR022711">
    <property type="entry name" value="RNase_Y_N"/>
</dbReference>
<dbReference type="NCBIfam" id="TIGR00277">
    <property type="entry name" value="HDIG"/>
    <property type="match status" value="1"/>
</dbReference>
<dbReference type="NCBIfam" id="TIGR03319">
    <property type="entry name" value="RNase_Y"/>
    <property type="match status" value="1"/>
</dbReference>
<dbReference type="PANTHER" id="PTHR12826">
    <property type="entry name" value="RIBONUCLEASE Y"/>
    <property type="match status" value="1"/>
</dbReference>
<dbReference type="PANTHER" id="PTHR12826:SF15">
    <property type="entry name" value="RIBONUCLEASE Y"/>
    <property type="match status" value="1"/>
</dbReference>
<dbReference type="Pfam" id="PF01966">
    <property type="entry name" value="HD"/>
    <property type="match status" value="1"/>
</dbReference>
<dbReference type="Pfam" id="PF00013">
    <property type="entry name" value="KH_1"/>
    <property type="match status" value="1"/>
</dbReference>
<dbReference type="Pfam" id="PF12072">
    <property type="entry name" value="RNase_Y_N"/>
    <property type="match status" value="1"/>
</dbReference>
<dbReference type="SMART" id="SM00471">
    <property type="entry name" value="HDc"/>
    <property type="match status" value="1"/>
</dbReference>
<dbReference type="SMART" id="SM00322">
    <property type="entry name" value="KH"/>
    <property type="match status" value="1"/>
</dbReference>
<dbReference type="SUPFAM" id="SSF54791">
    <property type="entry name" value="Eukaryotic type KH-domain (KH-domain type I)"/>
    <property type="match status" value="1"/>
</dbReference>
<dbReference type="SUPFAM" id="SSF109604">
    <property type="entry name" value="HD-domain/PDEase-like"/>
    <property type="match status" value="1"/>
</dbReference>
<dbReference type="PROSITE" id="PS51831">
    <property type="entry name" value="HD"/>
    <property type="match status" value="1"/>
</dbReference>
<dbReference type="PROSITE" id="PS50084">
    <property type="entry name" value="KH_TYPE_1"/>
    <property type="match status" value="1"/>
</dbReference>
<accession>B0K1B6</accession>
<feature type="chain" id="PRO_0000344962" description="Ribonuclease Y">
    <location>
        <begin position="1"/>
        <end position="508"/>
    </location>
</feature>
<feature type="transmembrane region" description="Helical" evidence="1">
    <location>
        <begin position="2"/>
        <end position="22"/>
    </location>
</feature>
<feature type="domain" description="KH" evidence="1">
    <location>
        <begin position="198"/>
        <end position="261"/>
    </location>
</feature>
<feature type="domain" description="HD" evidence="2">
    <location>
        <begin position="324"/>
        <end position="417"/>
    </location>
</feature>
<evidence type="ECO:0000255" key="1">
    <source>
        <dbReference type="HAMAP-Rule" id="MF_00335"/>
    </source>
</evidence>
<evidence type="ECO:0000255" key="2">
    <source>
        <dbReference type="PROSITE-ProRule" id="PRU01175"/>
    </source>
</evidence>
<sequence>MIITALIAIAVGFLIGYLARKIIAESKIKSAENLARTILESAKRDAENKKRELLLEAKEEIHRMRTDLEKEIRDRRGELQRLEKRLLQKEETLDKRAETLEQKENLLEEKQKEIQQLEEQISLLHQKEIEELERISGLSREEAKAILLESVQKDIQHEMAVMIKEMENKAKEEAEMKAREIISNAIQRCAADHAAETTVSVVTLPNDEMKGRIIGREGRNIRTIETLTGIDLIIDDTPEAVVISGFDPIRREVARIALEKLIEDGRIHPARIEEMVEKAKKEVDNMIIKAGEEAAFEVGIHGLHPELIKLLGRLKFRTSYGQNVLKHSIEVAHLAGLMAYELGADALVAKRAGLLHDIGKAVDHEVEGPHVMIGAELAKRYHESDAVIHAIMAHHNDVEPQTVEAVLVQAADAISAARPGARREALEAYIKRLDKLEQIANSFEGVEKSYAIQAGREIRIMVKPEIVNDDDIVILARNISKKIEEEVEYPGQIKVTVIRETVAVDYAK</sequence>
<comment type="function">
    <text evidence="1">Endoribonuclease that initiates mRNA decay.</text>
</comment>
<comment type="subcellular location">
    <subcellularLocation>
        <location evidence="1">Cell membrane</location>
        <topology evidence="1">Single-pass membrane protein</topology>
    </subcellularLocation>
</comment>
<comment type="similarity">
    <text evidence="1">Belongs to the RNase Y family.</text>
</comment>
<organism>
    <name type="scientific">Thermoanaerobacter sp. (strain X514)</name>
    <dbReference type="NCBI Taxonomy" id="399726"/>
    <lineage>
        <taxon>Bacteria</taxon>
        <taxon>Bacillati</taxon>
        <taxon>Bacillota</taxon>
        <taxon>Clostridia</taxon>
        <taxon>Thermoanaerobacterales</taxon>
        <taxon>Thermoanaerobacteraceae</taxon>
        <taxon>Thermoanaerobacter</taxon>
    </lineage>
</organism>
<name>RNY_THEPX</name>